<organism>
    <name type="scientific">Bradyrhizobium diazoefficiens (strain JCM 10833 / BCRC 13528 / IAM 13628 / NBRC 14792 / USDA 110)</name>
    <dbReference type="NCBI Taxonomy" id="224911"/>
    <lineage>
        <taxon>Bacteria</taxon>
        <taxon>Pseudomonadati</taxon>
        <taxon>Pseudomonadota</taxon>
        <taxon>Alphaproteobacteria</taxon>
        <taxon>Hyphomicrobiales</taxon>
        <taxon>Nitrobacteraceae</taxon>
        <taxon>Bradyrhizobium</taxon>
    </lineage>
</organism>
<keyword id="KW-0378">Hydrolase</keyword>
<keyword id="KW-0479">Metal-binding</keyword>
<keyword id="KW-1185">Reference proteome</keyword>
<keyword id="KW-0862">Zinc</keyword>
<feature type="chain" id="PRO_0000309628" description="Hydroxyacylglutathione hydrolase">
    <location>
        <begin position="1"/>
        <end position="255"/>
    </location>
</feature>
<feature type="binding site" evidence="1">
    <location>
        <position position="56"/>
    </location>
    <ligand>
        <name>Zn(2+)</name>
        <dbReference type="ChEBI" id="CHEBI:29105"/>
        <label>1</label>
    </ligand>
</feature>
<feature type="binding site" evidence="1">
    <location>
        <position position="58"/>
    </location>
    <ligand>
        <name>Zn(2+)</name>
        <dbReference type="ChEBI" id="CHEBI:29105"/>
        <label>1</label>
    </ligand>
</feature>
<feature type="binding site" evidence="1">
    <location>
        <position position="60"/>
    </location>
    <ligand>
        <name>Zn(2+)</name>
        <dbReference type="ChEBI" id="CHEBI:29105"/>
        <label>2</label>
    </ligand>
</feature>
<feature type="binding site" evidence="1">
    <location>
        <position position="61"/>
    </location>
    <ligand>
        <name>Zn(2+)</name>
        <dbReference type="ChEBI" id="CHEBI:29105"/>
        <label>2</label>
    </ligand>
</feature>
<feature type="binding site" evidence="1">
    <location>
        <position position="114"/>
    </location>
    <ligand>
        <name>Zn(2+)</name>
        <dbReference type="ChEBI" id="CHEBI:29105"/>
        <label>1</label>
    </ligand>
</feature>
<feature type="binding site" evidence="1">
    <location>
        <position position="133"/>
    </location>
    <ligand>
        <name>Zn(2+)</name>
        <dbReference type="ChEBI" id="CHEBI:29105"/>
        <label>1</label>
    </ligand>
</feature>
<feature type="binding site" evidence="1">
    <location>
        <position position="133"/>
    </location>
    <ligand>
        <name>Zn(2+)</name>
        <dbReference type="ChEBI" id="CHEBI:29105"/>
        <label>2</label>
    </ligand>
</feature>
<feature type="binding site" evidence="1">
    <location>
        <position position="171"/>
    </location>
    <ligand>
        <name>Zn(2+)</name>
        <dbReference type="ChEBI" id="CHEBI:29105"/>
        <label>2</label>
    </ligand>
</feature>
<sequence length="255" mass="27962">MAAEIRTFSCLNDNFGYLIHDVETKATASIDAPEAGPILKALEREGWQLTDILITHHHGDHVGGVAELKHKYNCRVVAPHDKTTAIANVDLRVANADVVKVGNLLARVVETPGHTLDHISYVFDTEKTVFAADTLFSIGCGRVFEGTYPMMWDSLLKLRALPDDFKLYCGHEYTASNVKFALTVDPDNAALQARAAEVAKLRAENKPTIPSLLGDEKRANVFLRADDPSVAARLHMKGADAAAVFGELRERKNKS</sequence>
<accession>Q89XT5</accession>
<name>GLO2_BRADU</name>
<proteinExistence type="inferred from homology"/>
<reference key="1">
    <citation type="journal article" date="2002" name="DNA Res.">
        <title>Complete genomic sequence of nitrogen-fixing symbiotic bacterium Bradyrhizobium japonicum USDA110.</title>
        <authorList>
            <person name="Kaneko T."/>
            <person name="Nakamura Y."/>
            <person name="Sato S."/>
            <person name="Minamisawa K."/>
            <person name="Uchiumi T."/>
            <person name="Sasamoto S."/>
            <person name="Watanabe A."/>
            <person name="Idesawa K."/>
            <person name="Iriguchi M."/>
            <person name="Kawashima K."/>
            <person name="Kohara M."/>
            <person name="Matsumoto M."/>
            <person name="Shimpo S."/>
            <person name="Tsuruoka H."/>
            <person name="Wada T."/>
            <person name="Yamada M."/>
            <person name="Tabata S."/>
        </authorList>
    </citation>
    <scope>NUCLEOTIDE SEQUENCE [LARGE SCALE GENOMIC DNA]</scope>
    <source>
        <strain>JCM 10833 / BCRC 13528 / IAM 13628 / NBRC 14792 / USDA 110</strain>
    </source>
</reference>
<comment type="function">
    <text evidence="1">Thiolesterase that catalyzes the hydrolysis of S-D-lactoyl-glutathione to form glutathione and D-lactic acid.</text>
</comment>
<comment type="catalytic activity">
    <reaction evidence="1">
        <text>an S-(2-hydroxyacyl)glutathione + H2O = a 2-hydroxy carboxylate + glutathione + H(+)</text>
        <dbReference type="Rhea" id="RHEA:21864"/>
        <dbReference type="ChEBI" id="CHEBI:15377"/>
        <dbReference type="ChEBI" id="CHEBI:15378"/>
        <dbReference type="ChEBI" id="CHEBI:57925"/>
        <dbReference type="ChEBI" id="CHEBI:58896"/>
        <dbReference type="ChEBI" id="CHEBI:71261"/>
        <dbReference type="EC" id="3.1.2.6"/>
    </reaction>
</comment>
<comment type="cofactor">
    <cofactor evidence="1">
        <name>Zn(2+)</name>
        <dbReference type="ChEBI" id="CHEBI:29105"/>
    </cofactor>
    <text evidence="1">Binds 2 Zn(2+) ions per subunit.</text>
</comment>
<comment type="pathway">
    <text evidence="1">Secondary metabolite metabolism; methylglyoxal degradation; (R)-lactate from methylglyoxal: step 2/2.</text>
</comment>
<comment type="subunit">
    <text evidence="1">Monomer.</text>
</comment>
<comment type="similarity">
    <text evidence="1">Belongs to the metallo-beta-lactamase superfamily. Glyoxalase II family.</text>
</comment>
<protein>
    <recommendedName>
        <fullName evidence="1">Hydroxyacylglutathione hydrolase</fullName>
        <ecNumber evidence="1">3.1.2.6</ecNumber>
    </recommendedName>
    <alternativeName>
        <fullName evidence="1">Glyoxalase II</fullName>
        <shortName evidence="1">Glx II</shortName>
    </alternativeName>
</protein>
<dbReference type="EC" id="3.1.2.6" evidence="1"/>
<dbReference type="EMBL" id="BA000040">
    <property type="protein sequence ID" value="BAC45487.1"/>
    <property type="molecule type" value="Genomic_DNA"/>
</dbReference>
<dbReference type="RefSeq" id="NP_766862.1">
    <property type="nucleotide sequence ID" value="NC_004463.1"/>
</dbReference>
<dbReference type="RefSeq" id="WP_011083054.1">
    <property type="nucleotide sequence ID" value="NC_004463.1"/>
</dbReference>
<dbReference type="SMR" id="Q89XT5"/>
<dbReference type="FunCoup" id="Q89XT5">
    <property type="interactions" value="497"/>
</dbReference>
<dbReference type="STRING" id="224911.AAV28_40355"/>
<dbReference type="EnsemblBacteria" id="BAC45487">
    <property type="protein sequence ID" value="BAC45487"/>
    <property type="gene ID" value="BAC45487"/>
</dbReference>
<dbReference type="GeneID" id="46495374"/>
<dbReference type="KEGG" id="bja:blr0222"/>
<dbReference type="PATRIC" id="fig|224911.44.peg.8742"/>
<dbReference type="eggNOG" id="COG0491">
    <property type="taxonomic scope" value="Bacteria"/>
</dbReference>
<dbReference type="HOGENOM" id="CLU_030571_4_1_5"/>
<dbReference type="InParanoid" id="Q89XT5"/>
<dbReference type="OrthoDB" id="9802248at2"/>
<dbReference type="PhylomeDB" id="Q89XT5"/>
<dbReference type="UniPathway" id="UPA00619">
    <property type="reaction ID" value="UER00676"/>
</dbReference>
<dbReference type="Proteomes" id="UP000002526">
    <property type="component" value="Chromosome"/>
</dbReference>
<dbReference type="GO" id="GO:0004416">
    <property type="term" value="F:hydroxyacylglutathione hydrolase activity"/>
    <property type="evidence" value="ECO:0007669"/>
    <property type="project" value="UniProtKB-UniRule"/>
</dbReference>
<dbReference type="GO" id="GO:0046872">
    <property type="term" value="F:metal ion binding"/>
    <property type="evidence" value="ECO:0007669"/>
    <property type="project" value="UniProtKB-KW"/>
</dbReference>
<dbReference type="GO" id="GO:0019243">
    <property type="term" value="P:methylglyoxal catabolic process to D-lactate via S-lactoyl-glutathione"/>
    <property type="evidence" value="ECO:0007669"/>
    <property type="project" value="InterPro"/>
</dbReference>
<dbReference type="CDD" id="cd07723">
    <property type="entry name" value="hydroxyacylglutathione_hydrolase_MBL-fold"/>
    <property type="match status" value="1"/>
</dbReference>
<dbReference type="Gene3D" id="3.60.15.10">
    <property type="entry name" value="Ribonuclease Z/Hydroxyacylglutathione hydrolase-like"/>
    <property type="match status" value="1"/>
</dbReference>
<dbReference type="HAMAP" id="MF_01374">
    <property type="entry name" value="Glyoxalase_2"/>
    <property type="match status" value="1"/>
</dbReference>
<dbReference type="InterPro" id="IPR035680">
    <property type="entry name" value="Clx_II_MBL"/>
</dbReference>
<dbReference type="InterPro" id="IPR050110">
    <property type="entry name" value="Glyoxalase_II_hydrolase"/>
</dbReference>
<dbReference type="InterPro" id="IPR032282">
    <property type="entry name" value="HAGH_C"/>
</dbReference>
<dbReference type="InterPro" id="IPR017782">
    <property type="entry name" value="Hydroxyacylglutathione_Hdrlase"/>
</dbReference>
<dbReference type="InterPro" id="IPR001279">
    <property type="entry name" value="Metallo-B-lactamas"/>
</dbReference>
<dbReference type="InterPro" id="IPR036866">
    <property type="entry name" value="RibonucZ/Hydroxyglut_hydro"/>
</dbReference>
<dbReference type="NCBIfam" id="TIGR03413">
    <property type="entry name" value="GSH_gloB"/>
    <property type="match status" value="1"/>
</dbReference>
<dbReference type="PANTHER" id="PTHR43705">
    <property type="entry name" value="HYDROXYACYLGLUTATHIONE HYDROLASE"/>
    <property type="match status" value="1"/>
</dbReference>
<dbReference type="PANTHER" id="PTHR43705:SF1">
    <property type="entry name" value="HYDROXYACYLGLUTATHIONE HYDROLASE GLOB"/>
    <property type="match status" value="1"/>
</dbReference>
<dbReference type="Pfam" id="PF16123">
    <property type="entry name" value="HAGH_C"/>
    <property type="match status" value="1"/>
</dbReference>
<dbReference type="Pfam" id="PF00753">
    <property type="entry name" value="Lactamase_B"/>
    <property type="match status" value="1"/>
</dbReference>
<dbReference type="PIRSF" id="PIRSF005457">
    <property type="entry name" value="Glx"/>
    <property type="match status" value="1"/>
</dbReference>
<dbReference type="SMART" id="SM00849">
    <property type="entry name" value="Lactamase_B"/>
    <property type="match status" value="1"/>
</dbReference>
<dbReference type="SUPFAM" id="SSF56281">
    <property type="entry name" value="Metallo-hydrolase/oxidoreductase"/>
    <property type="match status" value="1"/>
</dbReference>
<gene>
    <name evidence="1" type="primary">gloB</name>
    <name type="ordered locus">blr0222</name>
</gene>
<evidence type="ECO:0000255" key="1">
    <source>
        <dbReference type="HAMAP-Rule" id="MF_01374"/>
    </source>
</evidence>